<reference key="1">
    <citation type="submission" date="2005-08" db="EMBL/GenBank/DDBJ databases">
        <title>Complete sequence of Chlorobium chlorochromatii CaD3.</title>
        <authorList>
            <consortium name="US DOE Joint Genome Institute"/>
            <person name="Copeland A."/>
            <person name="Lucas S."/>
            <person name="Lapidus A."/>
            <person name="Barry K."/>
            <person name="Detter J.C."/>
            <person name="Glavina T."/>
            <person name="Hammon N."/>
            <person name="Israni S."/>
            <person name="Pitluck S."/>
            <person name="Bryant D."/>
            <person name="Schmutz J."/>
            <person name="Larimer F."/>
            <person name="Land M."/>
            <person name="Kyrpides N."/>
            <person name="Ivanova N."/>
            <person name="Richardson P."/>
        </authorList>
    </citation>
    <scope>NUCLEOTIDE SEQUENCE [LARGE SCALE GENOMIC DNA]</scope>
    <source>
        <strain>CaD3</strain>
    </source>
</reference>
<accession>Q3ANZ4</accession>
<feature type="chain" id="PRO_1000013312" description="Large ribosomal subunit protein bL34">
    <location>
        <begin position="1"/>
        <end position="51"/>
    </location>
</feature>
<feature type="region of interest" description="Disordered" evidence="2">
    <location>
        <begin position="1"/>
        <end position="51"/>
    </location>
</feature>
<feature type="compositionally biased region" description="Basic residues" evidence="2">
    <location>
        <begin position="1"/>
        <end position="19"/>
    </location>
</feature>
<feature type="compositionally biased region" description="Basic residues" evidence="2">
    <location>
        <begin position="26"/>
        <end position="40"/>
    </location>
</feature>
<feature type="compositionally biased region" description="Polar residues" evidence="2">
    <location>
        <begin position="42"/>
        <end position="51"/>
    </location>
</feature>
<sequence>MKRTFQPHNRKRRNKHGFRQRMATKNGRKVLSARRAKGRHSLSVSSDMVRH</sequence>
<comment type="similarity">
    <text evidence="1">Belongs to the bacterial ribosomal protein bL34 family.</text>
</comment>
<organism>
    <name type="scientific">Chlorobium chlorochromatii (strain CaD3)</name>
    <dbReference type="NCBI Taxonomy" id="340177"/>
    <lineage>
        <taxon>Bacteria</taxon>
        <taxon>Pseudomonadati</taxon>
        <taxon>Chlorobiota</taxon>
        <taxon>Chlorobiia</taxon>
        <taxon>Chlorobiales</taxon>
        <taxon>Chlorobiaceae</taxon>
        <taxon>Chlorobium/Pelodictyon group</taxon>
        <taxon>Chlorobium</taxon>
    </lineage>
</organism>
<name>RL34_CHLCH</name>
<dbReference type="EMBL" id="CP000108">
    <property type="protein sequence ID" value="ABB29281.1"/>
    <property type="molecule type" value="Genomic_DNA"/>
</dbReference>
<dbReference type="SMR" id="Q3ANZ4"/>
<dbReference type="STRING" id="340177.Cag_2033"/>
<dbReference type="KEGG" id="cch:Cag_2033"/>
<dbReference type="eggNOG" id="COG0230">
    <property type="taxonomic scope" value="Bacteria"/>
</dbReference>
<dbReference type="HOGENOM" id="CLU_129938_2_0_10"/>
<dbReference type="OrthoDB" id="9804164at2"/>
<dbReference type="GO" id="GO:1990904">
    <property type="term" value="C:ribonucleoprotein complex"/>
    <property type="evidence" value="ECO:0007669"/>
    <property type="project" value="UniProtKB-KW"/>
</dbReference>
<dbReference type="GO" id="GO:0005840">
    <property type="term" value="C:ribosome"/>
    <property type="evidence" value="ECO:0007669"/>
    <property type="project" value="UniProtKB-KW"/>
</dbReference>
<dbReference type="GO" id="GO:0003735">
    <property type="term" value="F:structural constituent of ribosome"/>
    <property type="evidence" value="ECO:0007669"/>
    <property type="project" value="InterPro"/>
</dbReference>
<dbReference type="GO" id="GO:0006412">
    <property type="term" value="P:translation"/>
    <property type="evidence" value="ECO:0007669"/>
    <property type="project" value="UniProtKB-UniRule"/>
</dbReference>
<dbReference type="FunFam" id="1.10.287.3980:FF:000001">
    <property type="entry name" value="Mitochondrial ribosomal protein L34"/>
    <property type="match status" value="1"/>
</dbReference>
<dbReference type="Gene3D" id="1.10.287.3980">
    <property type="match status" value="1"/>
</dbReference>
<dbReference type="HAMAP" id="MF_00391">
    <property type="entry name" value="Ribosomal_bL34"/>
    <property type="match status" value="1"/>
</dbReference>
<dbReference type="InterPro" id="IPR000271">
    <property type="entry name" value="Ribosomal_bL34"/>
</dbReference>
<dbReference type="InterPro" id="IPR020939">
    <property type="entry name" value="Ribosomal_bL34_CS"/>
</dbReference>
<dbReference type="NCBIfam" id="TIGR01030">
    <property type="entry name" value="rpmH_bact"/>
    <property type="match status" value="1"/>
</dbReference>
<dbReference type="PANTHER" id="PTHR14503:SF4">
    <property type="entry name" value="LARGE RIBOSOMAL SUBUNIT PROTEIN BL34M"/>
    <property type="match status" value="1"/>
</dbReference>
<dbReference type="PANTHER" id="PTHR14503">
    <property type="entry name" value="MITOCHONDRIAL RIBOSOMAL PROTEIN 34 FAMILY MEMBER"/>
    <property type="match status" value="1"/>
</dbReference>
<dbReference type="Pfam" id="PF00468">
    <property type="entry name" value="Ribosomal_L34"/>
    <property type="match status" value="1"/>
</dbReference>
<dbReference type="PROSITE" id="PS00784">
    <property type="entry name" value="RIBOSOMAL_L34"/>
    <property type="match status" value="1"/>
</dbReference>
<keyword id="KW-0687">Ribonucleoprotein</keyword>
<keyword id="KW-0689">Ribosomal protein</keyword>
<gene>
    <name evidence="1" type="primary">rpmH</name>
    <name type="ordered locus">Cag_2033</name>
</gene>
<evidence type="ECO:0000255" key="1">
    <source>
        <dbReference type="HAMAP-Rule" id="MF_00391"/>
    </source>
</evidence>
<evidence type="ECO:0000256" key="2">
    <source>
        <dbReference type="SAM" id="MobiDB-lite"/>
    </source>
</evidence>
<evidence type="ECO:0000305" key="3"/>
<protein>
    <recommendedName>
        <fullName evidence="1">Large ribosomal subunit protein bL34</fullName>
    </recommendedName>
    <alternativeName>
        <fullName evidence="3">50S ribosomal protein L34</fullName>
    </alternativeName>
</protein>
<proteinExistence type="inferred from homology"/>